<evidence type="ECO:0000250" key="1"/>
<evidence type="ECO:0000255" key="2"/>
<evidence type="ECO:0000255" key="3">
    <source>
        <dbReference type="PROSITE-ProRule" id="PRU01364"/>
    </source>
</evidence>
<evidence type="ECO:0000256" key="4">
    <source>
        <dbReference type="SAM" id="MobiDB-lite"/>
    </source>
</evidence>
<evidence type="ECO:0000305" key="5"/>
<gene>
    <name type="ORF">C1/C2</name>
</gene>
<sequence>MSSLPVSESEGEGSGTSVQVPSRGGQVTPGEKAFSLRTKHVFLTYPRCPISPEEAGQKIADRLKNKKCNYIYISREFHADGEPHLHAFVQLEANFRTTSPKYFDLDEFHPNIQAARQPASTLKYCMKHPESSWEFGKFLKPKVNRSPTQSASRDKTMKQIMANATSRDEYLSMVRKSFPFEWAVRLQQFQYSANALFPDPPQTYSAPYASRDMSDHPVIGEWLQQELYTWSPGVRRRSLYICGPTRTGKTSWARSLGTHHYWQHSVNFLEEWNCQAQFNIIDDIPFKFVPCWKGLVGSQYDLTVNPKYGKKKRIPNGIPCIILVNEDEDWLQSMSTQQVDWFHGNAVVYHLLPGETFIPSE</sequence>
<name>REP_CSMV</name>
<proteinExistence type="inferred from homology"/>
<protein>
    <recommendedName>
        <fullName>Replication-associated protein</fullName>
        <shortName>Rep</shortName>
        <ecNumber>2.7.7.-</ecNumber>
        <ecNumber>3.1.21.-</ecNumber>
    </recommendedName>
</protein>
<feature type="chain" id="PRO_0000222283" description="Replication-associated protein">
    <location>
        <begin position="1"/>
        <end position="361"/>
    </location>
</feature>
<feature type="domain" description="CRESS-DNA virus Rep endonuclease" evidence="3">
    <location>
        <begin position="35"/>
        <end position="138"/>
    </location>
</feature>
<feature type="region of interest" description="Disordered" evidence="4">
    <location>
        <begin position="1"/>
        <end position="31"/>
    </location>
</feature>
<feature type="region of interest" description="Oligomerization" evidence="1">
    <location>
        <begin position="192"/>
        <end position="204"/>
    </location>
</feature>
<feature type="region of interest" description="Transactivation" evidence="1">
    <location>
        <begin position="266"/>
        <end position="285"/>
    </location>
</feature>
<feature type="short sequence motif" description="RCR-1" evidence="3">
    <location>
        <begin position="42"/>
        <end position="45"/>
    </location>
</feature>
<feature type="short sequence motif" description="RCR-2" evidence="3">
    <location>
        <begin position="84"/>
        <end position="86"/>
    </location>
</feature>
<feature type="short sequence motif" description="RCR-3" evidence="3">
    <location>
        <begin position="124"/>
        <end position="127"/>
    </location>
</feature>
<feature type="short sequence motif" description="Nuclear localization signal" evidence="2">
    <location>
        <begin position="307"/>
        <end position="317"/>
    </location>
</feature>
<feature type="active site" description="For DNA cleavage activity" evidence="3">
    <location>
        <position position="124"/>
    </location>
</feature>
<feature type="binding site" evidence="2">
    <location>
        <position position="76"/>
    </location>
    <ligand>
        <name>a divalent metal cation</name>
        <dbReference type="ChEBI" id="CHEBI:60240"/>
    </ligand>
</feature>
<feature type="binding site" evidence="2">
    <location>
        <position position="84"/>
    </location>
    <ligand>
        <name>a divalent metal cation</name>
        <dbReference type="ChEBI" id="CHEBI:60240"/>
    </ligand>
</feature>
<feature type="binding site" evidence="2">
    <location>
        <position position="86"/>
    </location>
    <ligand>
        <name>a divalent metal cation</name>
        <dbReference type="ChEBI" id="CHEBI:60240"/>
    </ligand>
</feature>
<feature type="binding site" evidence="2">
    <location>
        <begin position="243"/>
        <end position="250"/>
    </location>
    <ligand>
        <name>ATP</name>
        <dbReference type="ChEBI" id="CHEBI:30616"/>
    </ligand>
</feature>
<organismHost>
    <name type="scientific">Avena sativa</name>
    <name type="common">Oat</name>
    <dbReference type="NCBI Taxonomy" id="4498"/>
</organismHost>
<organismHost>
    <name type="scientific">Chloris gayana</name>
    <dbReference type="NCBI Taxonomy" id="110876"/>
</organismHost>
<organismHost>
    <name type="scientific">Dactylis glomerata</name>
    <name type="common">Orchard grass</name>
    <name type="synonym">Cock's-foot grass</name>
    <dbReference type="NCBI Taxonomy" id="4509"/>
</organismHost>
<organismHost>
    <name type="scientific">Hordeum vulgare</name>
    <name type="common">Barley</name>
    <dbReference type="NCBI Taxonomy" id="4513"/>
</organismHost>
<organismHost>
    <name type="scientific">Ixophorus unisetus</name>
    <dbReference type="NCBI Taxonomy" id="279312"/>
</organismHost>
<organismHost>
    <name type="scientific">Triticum</name>
    <dbReference type="NCBI Taxonomy" id="4564"/>
</organismHost>
<organismHost>
    <name type="scientific">Zea mays</name>
    <name type="common">Maize</name>
    <dbReference type="NCBI Taxonomy" id="4577"/>
</organismHost>
<dbReference type="EC" id="2.7.7.-"/>
<dbReference type="EC" id="3.1.21.-"/>
<dbReference type="EMBL" id="M20021">
    <property type="status" value="NOT_ANNOTATED_CDS"/>
    <property type="molecule type" value="Genomic_DNA"/>
</dbReference>
<dbReference type="PIR" id="JU0044">
    <property type="entry name" value="JU0044"/>
</dbReference>
<dbReference type="SMR" id="P18919"/>
<dbReference type="Proteomes" id="UP000203767">
    <property type="component" value="Genome"/>
</dbReference>
<dbReference type="GO" id="GO:0042025">
    <property type="term" value="C:host cell nucleus"/>
    <property type="evidence" value="ECO:0007669"/>
    <property type="project" value="UniProtKB-SubCell"/>
</dbReference>
<dbReference type="GO" id="GO:0005524">
    <property type="term" value="F:ATP binding"/>
    <property type="evidence" value="ECO:0007669"/>
    <property type="project" value="UniProtKB-KW"/>
</dbReference>
<dbReference type="GO" id="GO:0003677">
    <property type="term" value="F:DNA binding"/>
    <property type="evidence" value="ECO:0007669"/>
    <property type="project" value="UniProtKB-KW"/>
</dbReference>
<dbReference type="GO" id="GO:0016888">
    <property type="term" value="F:endodeoxyribonuclease activity, producing 5'-phosphomonoesters"/>
    <property type="evidence" value="ECO:0007669"/>
    <property type="project" value="InterPro"/>
</dbReference>
<dbReference type="GO" id="GO:0004386">
    <property type="term" value="F:helicase activity"/>
    <property type="evidence" value="ECO:0007669"/>
    <property type="project" value="UniProtKB-KW"/>
</dbReference>
<dbReference type="GO" id="GO:0046872">
    <property type="term" value="F:metal ion binding"/>
    <property type="evidence" value="ECO:0007669"/>
    <property type="project" value="UniProtKB-KW"/>
</dbReference>
<dbReference type="GO" id="GO:0016779">
    <property type="term" value="F:nucleotidyltransferase activity"/>
    <property type="evidence" value="ECO:0007669"/>
    <property type="project" value="UniProtKB-KW"/>
</dbReference>
<dbReference type="GO" id="GO:0005198">
    <property type="term" value="F:structural molecule activity"/>
    <property type="evidence" value="ECO:0007669"/>
    <property type="project" value="InterPro"/>
</dbReference>
<dbReference type="GO" id="GO:0006260">
    <property type="term" value="P:DNA replication"/>
    <property type="evidence" value="ECO:0007669"/>
    <property type="project" value="UniProtKB-KW"/>
</dbReference>
<dbReference type="Gene3D" id="3.40.1310.20">
    <property type="match status" value="1"/>
</dbReference>
<dbReference type="InterPro" id="IPR049912">
    <property type="entry name" value="CRESS_DNA_REP"/>
</dbReference>
<dbReference type="InterPro" id="IPR001301">
    <property type="entry name" value="Gemini_AL1_CLV"/>
</dbReference>
<dbReference type="InterPro" id="IPR001191">
    <property type="entry name" value="Gemini_AL1_REP"/>
</dbReference>
<dbReference type="InterPro" id="IPR022692">
    <property type="entry name" value="Gemini_AL1_REP_central"/>
</dbReference>
<dbReference type="InterPro" id="IPR027417">
    <property type="entry name" value="P-loop_NTPase"/>
</dbReference>
<dbReference type="Pfam" id="PF00799">
    <property type="entry name" value="Gemini_AL1"/>
    <property type="match status" value="1"/>
</dbReference>
<dbReference type="Pfam" id="PF08283">
    <property type="entry name" value="Gemini_AL1_M"/>
    <property type="match status" value="1"/>
</dbReference>
<dbReference type="PRINTS" id="PR00227">
    <property type="entry name" value="GEMCOATAL1"/>
</dbReference>
<dbReference type="PRINTS" id="PR00228">
    <property type="entry name" value="GEMCOATCLVL1"/>
</dbReference>
<dbReference type="SUPFAM" id="SSF55464">
    <property type="entry name" value="Origin of replication-binding domain, RBD-like"/>
    <property type="match status" value="1"/>
</dbReference>
<dbReference type="SUPFAM" id="SSF52540">
    <property type="entry name" value="P-loop containing nucleoside triphosphate hydrolases"/>
    <property type="match status" value="1"/>
</dbReference>
<dbReference type="PROSITE" id="PS52020">
    <property type="entry name" value="CRESS_DNA_REP"/>
    <property type="match status" value="1"/>
</dbReference>
<organism>
    <name type="scientific">Chloris striate mosaic virus</name>
    <name type="common">CSMV</name>
    <dbReference type="NCBI Taxonomy" id="10820"/>
    <lineage>
        <taxon>Viruses</taxon>
        <taxon>Monodnaviria</taxon>
        <taxon>Shotokuvirae</taxon>
        <taxon>Cressdnaviricota</taxon>
        <taxon>Repensiviricetes</taxon>
        <taxon>Geplafuvirales</taxon>
        <taxon>Geminiviridae</taxon>
        <taxon>Mastrevirus</taxon>
    </lineage>
</organism>
<reference key="1">
    <citation type="journal article" date="1988" name="Virology">
        <title>Nucleotide sequence of the geminivirus chloris striate mosaic virus.</title>
        <authorList>
            <person name="Andersen M.T."/>
            <person name="Richardson K.A."/>
            <person name="Harbison S.A."/>
            <person name="Morris B.A.M."/>
        </authorList>
    </citation>
    <scope>NUCLEOTIDE SEQUENCE [GENOMIC DNA]</scope>
</reference>
<accession>P18919</accession>
<comment type="function">
    <text evidence="1">Essential for the replication of viral ssDNA. The closed circular ssDNA genome is first converted to a superhelical dsDNA. Rep binds a specific region at the genome origin of replication. It introduces an endonucleolytic nick within the conserved sequence 5'-TAATATTAC-3' in the intergenic region of the genome present in all geminiviruses, thereby initiating the rolling circle replication (RCR). Following cleavage, binds covalently to the 5'-phosphate of DNA as a tyrosyl ester. The cleavage gives rise to a free 3'-OH that serves as a primer for the cellular DNA polymerase. The polymerase synthesizes the (+) strand DNA by rolling circle mechanism. After one round of replication, a Rep-catalyzed nucleotidyl transfer reaction releases a circular single-stranded virus genome, thereby terminating the replication. Displays origin-specific DNA cleavage, nucleotidyl transferase, ATPase and helicase activities. Acts as an inhibitor of C-sense gene transcription (By similarity).</text>
</comment>
<comment type="cofactor">
    <cofactor evidence="1">
        <name>Mg(2+)</name>
        <dbReference type="ChEBI" id="CHEBI:18420"/>
    </cofactor>
    <cofactor evidence="1">
        <name>Mn(2+)</name>
        <dbReference type="ChEBI" id="CHEBI:29035"/>
    </cofactor>
    <text evidence="1">Divalent metal cations, possibly Mg(2+) or Mn(2+).</text>
</comment>
<comment type="subunit">
    <text>Homooligomer. Rep binds to repeated DNA motifs (iterons). Forms the O-complex, which is a Rep-DNA complex involved in the initiation of RCR. Part of the C- and V-complexes which are RepA-Rep-DNA complexes involved in the c-sense and v-sense transcription.</text>
</comment>
<comment type="subcellular location">
    <subcellularLocation>
        <location evidence="1">Host nucleus</location>
    </subcellularLocation>
</comment>
<comment type="alternative products">
    <event type="alternative splicing"/>
    <isoform>
        <id>P18919-1</id>
        <name>Rep</name>
        <sequence type="displayed"/>
    </isoform>
    <isoform>
        <id>P18921-1</id>
        <name>RepA</name>
        <sequence type="external"/>
    </isoform>
</comment>
<comment type="domain">
    <text>There are 3 rolling circle replication (RCR) motifs. RCR-2 is probably involved in metal coordination. RCR-3 is required for phosphodiester bond cleavage for initiation of RCR.</text>
</comment>
<comment type="similarity">
    <text evidence="5">Belongs to the geminiviridae Rep protein family.</text>
</comment>
<keyword id="KW-0025">Alternative splicing</keyword>
<keyword id="KW-0067">ATP-binding</keyword>
<keyword id="KW-0190">Covalent protein-DNA linkage</keyword>
<keyword id="KW-0235">DNA replication</keyword>
<keyword id="KW-0238">DNA-binding</keyword>
<keyword id="KW-0255">Endonuclease</keyword>
<keyword id="KW-0347">Helicase</keyword>
<keyword id="KW-1048">Host nucleus</keyword>
<keyword id="KW-0378">Hydrolase</keyword>
<keyword id="KW-0479">Metal-binding</keyword>
<keyword id="KW-0511">Multifunctional enzyme</keyword>
<keyword id="KW-0540">Nuclease</keyword>
<keyword id="KW-0547">Nucleotide-binding</keyword>
<keyword id="KW-0548">Nucleotidyltransferase</keyword>
<keyword id="KW-1185">Reference proteome</keyword>
<keyword id="KW-0678">Repressor</keyword>
<keyword id="KW-0808">Transferase</keyword>